<name>NRDR_GEOUR</name>
<sequence>MKCPFCAFADSKVVDSRPDKGGSTIRRRRECESCGKRFTTHERVEEILPLVIKKDGRREPFDRMKLVAGIQKACEKRPVSVETIERLVDRLEIQMQESGEKEIPSKSLGEWVMAELHSIDQVAYVRFASVYRSFKDITEFMSELQDLLKK</sequence>
<dbReference type="EMBL" id="CP000698">
    <property type="protein sequence ID" value="ABQ26371.1"/>
    <property type="molecule type" value="Genomic_DNA"/>
</dbReference>
<dbReference type="RefSeq" id="WP_011939070.1">
    <property type="nucleotide sequence ID" value="NC_009483.1"/>
</dbReference>
<dbReference type="SMR" id="A5G3K3"/>
<dbReference type="STRING" id="351605.Gura_2184"/>
<dbReference type="KEGG" id="gur:Gura_2184"/>
<dbReference type="HOGENOM" id="CLU_108412_0_0_7"/>
<dbReference type="OrthoDB" id="9807461at2"/>
<dbReference type="Proteomes" id="UP000006695">
    <property type="component" value="Chromosome"/>
</dbReference>
<dbReference type="GO" id="GO:0005524">
    <property type="term" value="F:ATP binding"/>
    <property type="evidence" value="ECO:0007669"/>
    <property type="project" value="UniProtKB-KW"/>
</dbReference>
<dbReference type="GO" id="GO:0003677">
    <property type="term" value="F:DNA binding"/>
    <property type="evidence" value="ECO:0007669"/>
    <property type="project" value="UniProtKB-KW"/>
</dbReference>
<dbReference type="GO" id="GO:0008270">
    <property type="term" value="F:zinc ion binding"/>
    <property type="evidence" value="ECO:0007669"/>
    <property type="project" value="UniProtKB-UniRule"/>
</dbReference>
<dbReference type="GO" id="GO:0045892">
    <property type="term" value="P:negative regulation of DNA-templated transcription"/>
    <property type="evidence" value="ECO:0007669"/>
    <property type="project" value="UniProtKB-UniRule"/>
</dbReference>
<dbReference type="HAMAP" id="MF_00440">
    <property type="entry name" value="NrdR"/>
    <property type="match status" value="1"/>
</dbReference>
<dbReference type="InterPro" id="IPR005144">
    <property type="entry name" value="ATP-cone_dom"/>
</dbReference>
<dbReference type="InterPro" id="IPR055173">
    <property type="entry name" value="NrdR-like_N"/>
</dbReference>
<dbReference type="InterPro" id="IPR003796">
    <property type="entry name" value="RNR_NrdR-like"/>
</dbReference>
<dbReference type="NCBIfam" id="TIGR00244">
    <property type="entry name" value="transcriptional regulator NrdR"/>
    <property type="match status" value="1"/>
</dbReference>
<dbReference type="PANTHER" id="PTHR30455">
    <property type="entry name" value="TRANSCRIPTIONAL REPRESSOR NRDR"/>
    <property type="match status" value="1"/>
</dbReference>
<dbReference type="PANTHER" id="PTHR30455:SF2">
    <property type="entry name" value="TRANSCRIPTIONAL REPRESSOR NRDR"/>
    <property type="match status" value="1"/>
</dbReference>
<dbReference type="Pfam" id="PF03477">
    <property type="entry name" value="ATP-cone"/>
    <property type="match status" value="1"/>
</dbReference>
<dbReference type="Pfam" id="PF22811">
    <property type="entry name" value="Zn_ribbon_NrdR"/>
    <property type="match status" value="1"/>
</dbReference>
<dbReference type="PROSITE" id="PS51161">
    <property type="entry name" value="ATP_CONE"/>
    <property type="match status" value="1"/>
</dbReference>
<organism>
    <name type="scientific">Geotalea uraniireducens (strain Rf4)</name>
    <name type="common">Geobacter uraniireducens</name>
    <dbReference type="NCBI Taxonomy" id="351605"/>
    <lineage>
        <taxon>Bacteria</taxon>
        <taxon>Pseudomonadati</taxon>
        <taxon>Thermodesulfobacteriota</taxon>
        <taxon>Desulfuromonadia</taxon>
        <taxon>Geobacterales</taxon>
        <taxon>Geobacteraceae</taxon>
        <taxon>Geotalea</taxon>
    </lineage>
</organism>
<comment type="function">
    <text evidence="1">Negatively regulates transcription of bacterial ribonucleotide reductase nrd genes and operons by binding to NrdR-boxes.</text>
</comment>
<comment type="cofactor">
    <cofactor evidence="1">
        <name>Zn(2+)</name>
        <dbReference type="ChEBI" id="CHEBI:29105"/>
    </cofactor>
    <text evidence="1">Binds 1 zinc ion.</text>
</comment>
<comment type="similarity">
    <text evidence="1">Belongs to the NrdR family.</text>
</comment>
<protein>
    <recommendedName>
        <fullName evidence="1">Transcriptional repressor NrdR</fullName>
    </recommendedName>
</protein>
<gene>
    <name evidence="1" type="primary">nrdR</name>
    <name type="ordered locus">Gura_2184</name>
</gene>
<proteinExistence type="inferred from homology"/>
<reference key="1">
    <citation type="submission" date="2007-05" db="EMBL/GenBank/DDBJ databases">
        <title>Complete sequence of Geobacter uraniireducens Rf4.</title>
        <authorList>
            <consortium name="US DOE Joint Genome Institute"/>
            <person name="Copeland A."/>
            <person name="Lucas S."/>
            <person name="Lapidus A."/>
            <person name="Barry K."/>
            <person name="Detter J.C."/>
            <person name="Glavina del Rio T."/>
            <person name="Hammon N."/>
            <person name="Israni S."/>
            <person name="Dalin E."/>
            <person name="Tice H."/>
            <person name="Pitluck S."/>
            <person name="Chertkov O."/>
            <person name="Brettin T."/>
            <person name="Bruce D."/>
            <person name="Han C."/>
            <person name="Schmutz J."/>
            <person name="Larimer F."/>
            <person name="Land M."/>
            <person name="Hauser L."/>
            <person name="Kyrpides N."/>
            <person name="Mikhailova N."/>
            <person name="Shelobolina E."/>
            <person name="Aklujkar M."/>
            <person name="Lovley D."/>
            <person name="Richardson P."/>
        </authorList>
    </citation>
    <scope>NUCLEOTIDE SEQUENCE [LARGE SCALE GENOMIC DNA]</scope>
    <source>
        <strain>ATCC BAA-1134 / JCM 13001 / Rf4</strain>
    </source>
</reference>
<evidence type="ECO:0000255" key="1">
    <source>
        <dbReference type="HAMAP-Rule" id="MF_00440"/>
    </source>
</evidence>
<feature type="chain" id="PRO_1000080753" description="Transcriptional repressor NrdR">
    <location>
        <begin position="1"/>
        <end position="150"/>
    </location>
</feature>
<feature type="domain" description="ATP-cone" evidence="1">
    <location>
        <begin position="49"/>
        <end position="139"/>
    </location>
</feature>
<feature type="zinc finger region" evidence="1">
    <location>
        <begin position="3"/>
        <end position="34"/>
    </location>
</feature>
<keyword id="KW-0067">ATP-binding</keyword>
<keyword id="KW-0238">DNA-binding</keyword>
<keyword id="KW-0479">Metal-binding</keyword>
<keyword id="KW-0547">Nucleotide-binding</keyword>
<keyword id="KW-1185">Reference proteome</keyword>
<keyword id="KW-0678">Repressor</keyword>
<keyword id="KW-0804">Transcription</keyword>
<keyword id="KW-0805">Transcription regulation</keyword>
<keyword id="KW-0862">Zinc</keyword>
<keyword id="KW-0863">Zinc-finger</keyword>
<accession>A5G3K3</accession>